<reference key="1">
    <citation type="journal article" date="1998" name="DNA Res.">
        <title>Complete sequence and gene organization of the genome of a hyper-thermophilic archaebacterium, Pyrococcus horikoshii OT3.</title>
        <authorList>
            <person name="Kawarabayasi Y."/>
            <person name="Sawada M."/>
            <person name="Horikawa H."/>
            <person name="Haikawa Y."/>
            <person name="Hino Y."/>
            <person name="Yamamoto S."/>
            <person name="Sekine M."/>
            <person name="Baba S."/>
            <person name="Kosugi H."/>
            <person name="Hosoyama A."/>
            <person name="Nagai Y."/>
            <person name="Sakai M."/>
            <person name="Ogura K."/>
            <person name="Otsuka R."/>
            <person name="Nakazawa H."/>
            <person name="Takamiya M."/>
            <person name="Ohfuku Y."/>
            <person name="Funahashi T."/>
            <person name="Tanaka T."/>
            <person name="Kudoh Y."/>
            <person name="Yamazaki J."/>
            <person name="Kushida N."/>
            <person name="Oguchi A."/>
            <person name="Aoki K."/>
            <person name="Yoshizawa T."/>
            <person name="Nakamura Y."/>
            <person name="Robb F.T."/>
            <person name="Horikoshi K."/>
            <person name="Masuchi Y."/>
            <person name="Shizuya H."/>
            <person name="Kikuchi H."/>
        </authorList>
    </citation>
    <scope>NUCLEOTIDE SEQUENCE [LARGE SCALE GENOMIC DNA]</scope>
    <source>
        <strain>ATCC 700860 / DSM 12428 / JCM 9974 / NBRC 100139 / OT-3</strain>
    </source>
</reference>
<accession>O59440</accession>
<name>RL30_PYRHO</name>
<comment type="subunit">
    <text evidence="1">Part of the 50S ribosomal subunit.</text>
</comment>
<comment type="similarity">
    <text evidence="1">Belongs to the universal ribosomal protein uL30 family.</text>
</comment>
<dbReference type="EMBL" id="BA000001">
    <property type="protein sequence ID" value="BAA30870.1"/>
    <property type="molecule type" value="Genomic_DNA"/>
</dbReference>
<dbReference type="PIR" id="G71184">
    <property type="entry name" value="G71184"/>
</dbReference>
<dbReference type="RefSeq" id="WP_010885820.1">
    <property type="nucleotide sequence ID" value="NC_000961.1"/>
</dbReference>
<dbReference type="SMR" id="O59440"/>
<dbReference type="STRING" id="70601.gene:9378753"/>
<dbReference type="EnsemblBacteria" id="BAA30870">
    <property type="protein sequence ID" value="BAA30870"/>
    <property type="gene ID" value="BAA30870"/>
</dbReference>
<dbReference type="GeneID" id="1442601"/>
<dbReference type="KEGG" id="pho:PH1756"/>
<dbReference type="eggNOG" id="arCOG04086">
    <property type="taxonomic scope" value="Archaea"/>
</dbReference>
<dbReference type="OrthoDB" id="6379at2157"/>
<dbReference type="Proteomes" id="UP000000752">
    <property type="component" value="Chromosome"/>
</dbReference>
<dbReference type="GO" id="GO:0022625">
    <property type="term" value="C:cytosolic large ribosomal subunit"/>
    <property type="evidence" value="ECO:0007669"/>
    <property type="project" value="TreeGrafter"/>
</dbReference>
<dbReference type="GO" id="GO:0003723">
    <property type="term" value="F:RNA binding"/>
    <property type="evidence" value="ECO:0007669"/>
    <property type="project" value="TreeGrafter"/>
</dbReference>
<dbReference type="GO" id="GO:0003735">
    <property type="term" value="F:structural constituent of ribosome"/>
    <property type="evidence" value="ECO:0007669"/>
    <property type="project" value="InterPro"/>
</dbReference>
<dbReference type="GO" id="GO:0000463">
    <property type="term" value="P:maturation of LSU-rRNA from tricistronic rRNA transcript (SSU-rRNA, 5.8S rRNA, LSU-rRNA)"/>
    <property type="evidence" value="ECO:0007669"/>
    <property type="project" value="TreeGrafter"/>
</dbReference>
<dbReference type="GO" id="GO:0006412">
    <property type="term" value="P:translation"/>
    <property type="evidence" value="ECO:0007669"/>
    <property type="project" value="UniProtKB-UniRule"/>
</dbReference>
<dbReference type="CDD" id="cd01657">
    <property type="entry name" value="Ribosomal_L7_archeal_euk"/>
    <property type="match status" value="1"/>
</dbReference>
<dbReference type="FunFam" id="1.10.15.30:FF:000002">
    <property type="entry name" value="50S ribosomal protein L30"/>
    <property type="match status" value="1"/>
</dbReference>
<dbReference type="Gene3D" id="1.10.15.30">
    <property type="match status" value="1"/>
</dbReference>
<dbReference type="Gene3D" id="3.30.1390.20">
    <property type="entry name" value="Ribosomal protein L30, ferredoxin-like fold domain"/>
    <property type="match status" value="1"/>
</dbReference>
<dbReference type="HAMAP" id="MF_01371_A">
    <property type="entry name" value="Ribosomal_uL30_A"/>
    <property type="match status" value="1"/>
</dbReference>
<dbReference type="InterPro" id="IPR036919">
    <property type="entry name" value="Ribo_uL30_ferredoxin-like_sf"/>
</dbReference>
<dbReference type="InterPro" id="IPR039699">
    <property type="entry name" value="Ribosomal_uL30"/>
</dbReference>
<dbReference type="InterPro" id="IPR005997">
    <property type="entry name" value="Ribosomal_uL30_arc"/>
</dbReference>
<dbReference type="InterPro" id="IPR018038">
    <property type="entry name" value="Ribosomal_uL30_CS"/>
</dbReference>
<dbReference type="InterPro" id="IPR035808">
    <property type="entry name" value="Ribosomal_uL30_euk_arc"/>
</dbReference>
<dbReference type="InterPro" id="IPR016082">
    <property type="entry name" value="Ribosomal_uL30_ferredoxin-like"/>
</dbReference>
<dbReference type="NCBIfam" id="NF004711">
    <property type="entry name" value="PRK06049.1"/>
    <property type="match status" value="1"/>
</dbReference>
<dbReference type="NCBIfam" id="TIGR01309">
    <property type="entry name" value="uL30_arch"/>
    <property type="match status" value="1"/>
</dbReference>
<dbReference type="PANTHER" id="PTHR11524">
    <property type="entry name" value="60S RIBOSOMAL PROTEIN L7"/>
    <property type="match status" value="1"/>
</dbReference>
<dbReference type="PANTHER" id="PTHR11524:SF16">
    <property type="entry name" value="LARGE RIBOSOMAL SUBUNIT PROTEIN UL30"/>
    <property type="match status" value="1"/>
</dbReference>
<dbReference type="Pfam" id="PF00327">
    <property type="entry name" value="Ribosomal_L30"/>
    <property type="match status" value="1"/>
</dbReference>
<dbReference type="SUPFAM" id="SSF55129">
    <property type="entry name" value="Ribosomal protein L30p/L7e"/>
    <property type="match status" value="1"/>
</dbReference>
<dbReference type="PROSITE" id="PS00634">
    <property type="entry name" value="RIBOSOMAL_L30"/>
    <property type="match status" value="1"/>
</dbReference>
<keyword id="KW-0687">Ribonucleoprotein</keyword>
<keyword id="KW-0689">Ribosomal protein</keyword>
<proteinExistence type="inferred from homology"/>
<feature type="chain" id="PRO_0000104629" description="Large ribosomal subunit protein uL30">
    <location>
        <begin position="1"/>
        <end position="155"/>
    </location>
</feature>
<gene>
    <name evidence="1" type="primary">rpl30</name>
    <name type="ordered locus">PH1756</name>
    <name type="ORF">PHLG025</name>
</gene>
<protein>
    <recommendedName>
        <fullName evidence="1">Large ribosomal subunit protein uL30</fullName>
    </recommendedName>
    <alternativeName>
        <fullName evidence="2">50S ribosomal protein L30</fullName>
    </alternativeName>
</protein>
<evidence type="ECO:0000255" key="1">
    <source>
        <dbReference type="HAMAP-Rule" id="MF_01371"/>
    </source>
</evidence>
<evidence type="ECO:0000305" key="2"/>
<sequence>MAKLAVIRIRGRVNVKRPVRDTLAMLRLHRVNHCVIVDDTPSYLGMLQKAKDYITWGEINAETLAKLIRKRGKLIGNKPVTDEYVKEKLGMTIEEFAQKVINGEMSLKDLPNLKPVFRLHPPRGGFKGSKKRSFQEGGALGYRGEKINELIERML</sequence>
<organism>
    <name type="scientific">Pyrococcus horikoshii (strain ATCC 700860 / DSM 12428 / JCM 9974 / NBRC 100139 / OT-3)</name>
    <dbReference type="NCBI Taxonomy" id="70601"/>
    <lineage>
        <taxon>Archaea</taxon>
        <taxon>Methanobacteriati</taxon>
        <taxon>Methanobacteriota</taxon>
        <taxon>Thermococci</taxon>
        <taxon>Thermococcales</taxon>
        <taxon>Thermococcaceae</taxon>
        <taxon>Pyrococcus</taxon>
    </lineage>
</organism>